<sequence length="159" mass="18477">MSRMPSSFDVTERDLDDMTFGERIIYHCKKQPLVPIGCLLTTGAVILAAQNVRLGNKWKAQYYFRWRVGLQAATLVALVAGSFIYGTSGKELKAKEEQLKEKAKMREKLWIQELERREEETEARRKRAELARMKTLENEEEIKNLEKELSDLENKLGKK</sequence>
<organism>
    <name type="scientific">Saccharomyces cerevisiae (strain RM11-1a)</name>
    <name type="common">Baker's yeast</name>
    <dbReference type="NCBI Taxonomy" id="285006"/>
    <lineage>
        <taxon>Eukaryota</taxon>
        <taxon>Fungi</taxon>
        <taxon>Dikarya</taxon>
        <taxon>Ascomycota</taxon>
        <taxon>Saccharomycotina</taxon>
        <taxon>Saccharomycetes</taxon>
        <taxon>Saccharomycetales</taxon>
        <taxon>Saccharomycetaceae</taxon>
        <taxon>Saccharomyces</taxon>
    </lineage>
</organism>
<keyword id="KW-0175">Coiled coil</keyword>
<keyword id="KW-0472">Membrane</keyword>
<keyword id="KW-0496">Mitochondrion</keyword>
<keyword id="KW-0812">Transmembrane</keyword>
<keyword id="KW-1133">Transmembrane helix</keyword>
<gene>
    <name type="primary">RCF1</name>
    <name type="synonym">AIM31</name>
    <name type="ORF">SCRG_01865</name>
</gene>
<proteinExistence type="inferred from homology"/>
<reference key="1">
    <citation type="submission" date="2005-03" db="EMBL/GenBank/DDBJ databases">
        <title>Annotation of the Saccharomyces cerevisiae RM11-1a genome.</title>
        <authorList>
            <consortium name="The Broad Institute Genome Sequencing Platform"/>
            <person name="Birren B.W."/>
            <person name="Lander E.S."/>
            <person name="Galagan J.E."/>
            <person name="Nusbaum C."/>
            <person name="Devon K."/>
            <person name="Cuomo C."/>
            <person name="Jaffe D.B."/>
            <person name="Butler J."/>
            <person name="Alvarez P."/>
            <person name="Gnerre S."/>
            <person name="Grabherr M."/>
            <person name="Kleber M."/>
            <person name="Mauceli E.W."/>
            <person name="Brockman W."/>
            <person name="MacCallum I.A."/>
            <person name="Rounsley S."/>
            <person name="Young S.K."/>
            <person name="LaButti K."/>
            <person name="Pushparaj V."/>
            <person name="DeCaprio D."/>
            <person name="Crawford M."/>
            <person name="Koehrsen M."/>
            <person name="Engels R."/>
            <person name="Montgomery P."/>
            <person name="Pearson M."/>
            <person name="Howarth C."/>
            <person name="Larson L."/>
            <person name="Luoma S."/>
            <person name="White J."/>
            <person name="O'Leary S."/>
            <person name="Kodira C.D."/>
            <person name="Zeng Q."/>
            <person name="Yandava C."/>
            <person name="Alvarado L."/>
            <person name="Pratt S."/>
            <person name="Kruglyak L."/>
        </authorList>
    </citation>
    <scope>NUCLEOTIDE SEQUENCE [LARGE SCALE GENOMIC DNA]</scope>
    <source>
        <strain>RM11-1a</strain>
    </source>
</reference>
<name>RCF1_YEAS1</name>
<dbReference type="EMBL" id="CH408047">
    <property type="protein sequence ID" value="EDV11475.1"/>
    <property type="molecule type" value="Genomic_DNA"/>
</dbReference>
<dbReference type="SMR" id="B3LLM2"/>
<dbReference type="HOGENOM" id="CLU_087356_1_0_1"/>
<dbReference type="OrthoDB" id="37547at4893"/>
<dbReference type="Proteomes" id="UP000008335">
    <property type="component" value="Unassembled WGS sequence"/>
</dbReference>
<dbReference type="GO" id="GO:0031966">
    <property type="term" value="C:mitochondrial membrane"/>
    <property type="evidence" value="ECO:0007669"/>
    <property type="project" value="UniProtKB-SubCell"/>
</dbReference>
<dbReference type="GO" id="GO:0097250">
    <property type="term" value="P:mitochondrial respirasome assembly"/>
    <property type="evidence" value="ECO:0007669"/>
    <property type="project" value="TreeGrafter"/>
</dbReference>
<dbReference type="Gene3D" id="6.10.140.1320">
    <property type="match status" value="1"/>
</dbReference>
<dbReference type="InterPro" id="IPR007667">
    <property type="entry name" value="Hypoxia_induced_domain"/>
</dbReference>
<dbReference type="InterPro" id="IPR050355">
    <property type="entry name" value="RCF1"/>
</dbReference>
<dbReference type="PANTHER" id="PTHR12297:SF3">
    <property type="entry name" value="HIG1 DOMAIN FAMILY MEMBER 1A"/>
    <property type="match status" value="1"/>
</dbReference>
<dbReference type="PANTHER" id="PTHR12297">
    <property type="entry name" value="HYPOXIA-INDUCBILE GENE 1 HIG1 -RELATED"/>
    <property type="match status" value="1"/>
</dbReference>
<dbReference type="Pfam" id="PF04588">
    <property type="entry name" value="HIG_1_N"/>
    <property type="match status" value="1"/>
</dbReference>
<dbReference type="PROSITE" id="PS51503">
    <property type="entry name" value="HIG1"/>
    <property type="match status" value="1"/>
</dbReference>
<evidence type="ECO:0000250" key="1"/>
<evidence type="ECO:0000255" key="2"/>
<evidence type="ECO:0000255" key="3">
    <source>
        <dbReference type="PROSITE-ProRule" id="PRU00836"/>
    </source>
</evidence>
<evidence type="ECO:0000305" key="4"/>
<protein>
    <recommendedName>
        <fullName>Respiratory supercomplex factor 1, mitochondrial</fullName>
    </recommendedName>
    <alternativeName>
        <fullName>Altered inheritance of mitochondria protein 31</fullName>
    </alternativeName>
</protein>
<feature type="chain" id="PRO_0000399656" description="Respiratory supercomplex factor 1, mitochondrial">
    <location>
        <begin position="1"/>
        <end position="159"/>
    </location>
</feature>
<feature type="transmembrane region" description="Helical" evidence="3">
    <location>
        <begin position="32"/>
        <end position="52"/>
    </location>
</feature>
<feature type="transmembrane region" description="Helical" evidence="3">
    <location>
        <begin position="68"/>
        <end position="88"/>
    </location>
</feature>
<feature type="domain" description="HIG1" evidence="3">
    <location>
        <begin position="5"/>
        <end position="96"/>
    </location>
</feature>
<feature type="coiled-coil region" evidence="2">
    <location>
        <begin position="88"/>
        <end position="159"/>
    </location>
</feature>
<accession>B3LLM2</accession>
<comment type="function">
    <text evidence="1">Cytochrome c oxidase subunit required for growth under hypoxic conditions. Involved in the assembly of the Complex III-Complex IV supercomplex, as well as in the recruitment of COX13 and RCF2 into cytochrome c oxidase. May also be required for late-stage assembly of the COX12 and COX13 subunits and for cytochrome c oxidase activity (By similarity).</text>
</comment>
<comment type="subunit">
    <text evidence="1">Associates with the respiratory chain complex III/complex IV supercomplex. Interacts with COX3.</text>
</comment>
<comment type="subcellular location">
    <subcellularLocation>
        <location evidence="3">Mitochondrion membrane</location>
        <topology evidence="3">Multi-pass membrane protein</topology>
    </subcellularLocation>
</comment>
<comment type="similarity">
    <text evidence="4">Belongs to the RCF1 family.</text>
</comment>